<name>SYW_PYRCJ</name>
<dbReference type="EC" id="6.1.1.2" evidence="1"/>
<dbReference type="EMBL" id="CP000561">
    <property type="protein sequence ID" value="ABO09239.1"/>
    <property type="molecule type" value="Genomic_DNA"/>
</dbReference>
<dbReference type="RefSeq" id="WP_011850497.1">
    <property type="nucleotide sequence ID" value="NC_009073.1"/>
</dbReference>
<dbReference type="SMR" id="A3MX72"/>
<dbReference type="STRING" id="410359.Pcal_1822"/>
<dbReference type="GeneID" id="4909500"/>
<dbReference type="KEGG" id="pcl:Pcal_1822"/>
<dbReference type="eggNOG" id="arCOG01887">
    <property type="taxonomic scope" value="Archaea"/>
</dbReference>
<dbReference type="HOGENOM" id="CLU_032621_0_1_2"/>
<dbReference type="OrthoDB" id="371821at2157"/>
<dbReference type="Proteomes" id="UP000001431">
    <property type="component" value="Chromosome"/>
</dbReference>
<dbReference type="GO" id="GO:0005737">
    <property type="term" value="C:cytoplasm"/>
    <property type="evidence" value="ECO:0007669"/>
    <property type="project" value="UniProtKB-SubCell"/>
</dbReference>
<dbReference type="GO" id="GO:0005524">
    <property type="term" value="F:ATP binding"/>
    <property type="evidence" value="ECO:0007669"/>
    <property type="project" value="UniProtKB-UniRule"/>
</dbReference>
<dbReference type="GO" id="GO:0004830">
    <property type="term" value="F:tryptophan-tRNA ligase activity"/>
    <property type="evidence" value="ECO:0007669"/>
    <property type="project" value="UniProtKB-UniRule"/>
</dbReference>
<dbReference type="GO" id="GO:0006436">
    <property type="term" value="P:tryptophanyl-tRNA aminoacylation"/>
    <property type="evidence" value="ECO:0007669"/>
    <property type="project" value="UniProtKB-UniRule"/>
</dbReference>
<dbReference type="CDD" id="cd00806">
    <property type="entry name" value="TrpRS_core"/>
    <property type="match status" value="1"/>
</dbReference>
<dbReference type="FunFam" id="1.10.240.10:FF:000007">
    <property type="entry name" value="Tryptophan--tRNA ligase"/>
    <property type="match status" value="1"/>
</dbReference>
<dbReference type="Gene3D" id="3.40.50.620">
    <property type="entry name" value="HUPs"/>
    <property type="match status" value="1"/>
</dbReference>
<dbReference type="Gene3D" id="1.10.240.10">
    <property type="entry name" value="Tyrosyl-Transfer RNA Synthetase"/>
    <property type="match status" value="1"/>
</dbReference>
<dbReference type="HAMAP" id="MF_00140_A">
    <property type="entry name" value="Trp_tRNA_synth_A"/>
    <property type="match status" value="1"/>
</dbReference>
<dbReference type="InterPro" id="IPR001412">
    <property type="entry name" value="aa-tRNA-synth_I_CS"/>
</dbReference>
<dbReference type="InterPro" id="IPR002305">
    <property type="entry name" value="aa-tRNA-synth_Ic"/>
</dbReference>
<dbReference type="InterPro" id="IPR014729">
    <property type="entry name" value="Rossmann-like_a/b/a_fold"/>
</dbReference>
<dbReference type="InterPro" id="IPR002306">
    <property type="entry name" value="Trp-tRNA-ligase"/>
</dbReference>
<dbReference type="InterPro" id="IPR020653">
    <property type="entry name" value="Tryptophan-tRNA-ligase_arc"/>
</dbReference>
<dbReference type="NCBIfam" id="NF008927">
    <property type="entry name" value="PRK12285.1-4"/>
    <property type="match status" value="1"/>
</dbReference>
<dbReference type="NCBIfam" id="TIGR00233">
    <property type="entry name" value="trpS"/>
    <property type="match status" value="1"/>
</dbReference>
<dbReference type="PANTHER" id="PTHR10055:SF1">
    <property type="entry name" value="TRYPTOPHAN--TRNA LIGASE, CYTOPLASMIC"/>
    <property type="match status" value="1"/>
</dbReference>
<dbReference type="PANTHER" id="PTHR10055">
    <property type="entry name" value="TRYPTOPHANYL-TRNA SYNTHETASE"/>
    <property type="match status" value="1"/>
</dbReference>
<dbReference type="Pfam" id="PF00579">
    <property type="entry name" value="tRNA-synt_1b"/>
    <property type="match status" value="1"/>
</dbReference>
<dbReference type="PRINTS" id="PR01039">
    <property type="entry name" value="TRNASYNTHTRP"/>
</dbReference>
<dbReference type="SUPFAM" id="SSF52374">
    <property type="entry name" value="Nucleotidylyl transferase"/>
    <property type="match status" value="1"/>
</dbReference>
<dbReference type="PROSITE" id="PS00178">
    <property type="entry name" value="AA_TRNA_LIGASE_I"/>
    <property type="match status" value="1"/>
</dbReference>
<gene>
    <name evidence="1" type="primary">trpS</name>
    <name type="ordered locus">Pcal_1822</name>
</gene>
<reference key="1">
    <citation type="submission" date="2007-02" db="EMBL/GenBank/DDBJ databases">
        <title>Complete sequence of Pyrobaculum calidifontis JCM 11548.</title>
        <authorList>
            <consortium name="US DOE Joint Genome Institute"/>
            <person name="Copeland A."/>
            <person name="Lucas S."/>
            <person name="Lapidus A."/>
            <person name="Barry K."/>
            <person name="Glavina del Rio T."/>
            <person name="Dalin E."/>
            <person name="Tice H."/>
            <person name="Pitluck S."/>
            <person name="Chain P."/>
            <person name="Malfatti S."/>
            <person name="Shin M."/>
            <person name="Vergez L."/>
            <person name="Schmutz J."/>
            <person name="Larimer F."/>
            <person name="Land M."/>
            <person name="Hauser L."/>
            <person name="Kyrpides N."/>
            <person name="Mikhailova N."/>
            <person name="Cozen A.E."/>
            <person name="Fitz-Gibbon S.T."/>
            <person name="House C.H."/>
            <person name="Saltikov C."/>
            <person name="Lowe T.M."/>
            <person name="Richardson P."/>
        </authorList>
    </citation>
    <scope>NUCLEOTIDE SEQUENCE [LARGE SCALE GENOMIC DNA]</scope>
    <source>
        <strain>DSM 21063 / JCM 11548 / VA1</strain>
    </source>
</reference>
<keyword id="KW-0030">Aminoacyl-tRNA synthetase</keyword>
<keyword id="KW-0067">ATP-binding</keyword>
<keyword id="KW-0963">Cytoplasm</keyword>
<keyword id="KW-0436">Ligase</keyword>
<keyword id="KW-0547">Nucleotide-binding</keyword>
<keyword id="KW-0648">Protein biosynthesis</keyword>
<feature type="chain" id="PRO_1000018997" description="Tryptophan--tRNA ligase">
    <location>
        <begin position="1"/>
        <end position="374"/>
    </location>
</feature>
<feature type="short sequence motif" description="'HIGH' region">
    <location>
        <begin position="81"/>
        <end position="89"/>
    </location>
</feature>
<feature type="short sequence motif" description="'KMSKS' region">
    <location>
        <begin position="258"/>
        <end position="262"/>
    </location>
</feature>
<proteinExistence type="inferred from homology"/>
<accession>A3MX72</accession>
<organism>
    <name type="scientific">Pyrobaculum calidifontis (strain DSM 21063 / JCM 11548 / VA1)</name>
    <dbReference type="NCBI Taxonomy" id="410359"/>
    <lineage>
        <taxon>Archaea</taxon>
        <taxon>Thermoproteota</taxon>
        <taxon>Thermoprotei</taxon>
        <taxon>Thermoproteales</taxon>
        <taxon>Thermoproteaceae</taxon>
        <taxon>Pyrobaculum</taxon>
    </lineage>
</organism>
<comment type="catalytic activity">
    <reaction evidence="1">
        <text>tRNA(Trp) + L-tryptophan + ATP = L-tryptophyl-tRNA(Trp) + AMP + diphosphate + H(+)</text>
        <dbReference type="Rhea" id="RHEA:24080"/>
        <dbReference type="Rhea" id="RHEA-COMP:9671"/>
        <dbReference type="Rhea" id="RHEA-COMP:9705"/>
        <dbReference type="ChEBI" id="CHEBI:15378"/>
        <dbReference type="ChEBI" id="CHEBI:30616"/>
        <dbReference type="ChEBI" id="CHEBI:33019"/>
        <dbReference type="ChEBI" id="CHEBI:57912"/>
        <dbReference type="ChEBI" id="CHEBI:78442"/>
        <dbReference type="ChEBI" id="CHEBI:78535"/>
        <dbReference type="ChEBI" id="CHEBI:456215"/>
        <dbReference type="EC" id="6.1.1.2"/>
    </reaction>
</comment>
<comment type="subcellular location">
    <subcellularLocation>
        <location evidence="1">Cytoplasm</location>
    </subcellularLocation>
</comment>
<comment type="similarity">
    <text evidence="1">Belongs to the class-I aminoacyl-tRNA synthetase family.</text>
</comment>
<sequence>MDEEFVVTPWEVRGRVDYQKLMQQFGARPLTQAEVSLLEKYAGEVHPLIRRGFFYAHRDLDAILKWHGEGKPWALYTGRGPSGPVHIGHMVPWILLKWLSDKFGVEVYFQMTDDEKFYDDPEMRLEEATKWAYENALDVIALGFTPDKLHLIIDTKDIKPLYPIAAKVAKKLTWNTVKATFGFTDSTNIGLIFYPSLQIAVAFLPTELHGRPTPVLIPCAIDQDPYFRLARDIAESLGYPKPATLYSKFIMALTGESKMSASNPNSAIYTIDDEKTIRRKIANAYTGGRPTAEEQRRLGGNPDVCPVYHYHMLFDPDDASVEKIYHSCKSGALLCGECKQMLYEKIRKFVKQHQEAREKARDKVDAYRLSSKLS</sequence>
<protein>
    <recommendedName>
        <fullName evidence="1">Tryptophan--tRNA ligase</fullName>
        <ecNumber evidence="1">6.1.1.2</ecNumber>
    </recommendedName>
    <alternativeName>
        <fullName evidence="1">Tryptophanyl-tRNA synthetase</fullName>
        <shortName evidence="1">TrpRS</shortName>
    </alternativeName>
</protein>
<evidence type="ECO:0000255" key="1">
    <source>
        <dbReference type="HAMAP-Rule" id="MF_00140"/>
    </source>
</evidence>